<accession>Q9NV92</accession>
<accession>Q7Z2H3</accession>
<accession>Q7Z428</accession>
<accession>Q8TAR3</accession>
<accession>Q9ULQ5</accession>
<reference key="1">
    <citation type="journal article" date="2003" name="J. Biol. Chem.">
        <title>Cloning and characterization of N4WBP5A, an inducible, cyclosporine-sensitive, Nedd4-binding protein in human T lymphocytes.</title>
        <authorList>
            <person name="Cristillo A.D."/>
            <person name="Nie L."/>
            <person name="Macri M.J."/>
            <person name="Bierer B.E."/>
        </authorList>
    </citation>
    <scope>NUCLEOTIDE SEQUENCE [MRNA]</scope>
    <scope>SUBCELLULAR LOCATION</scope>
    <scope>TISSUE SPECIFICITY</scope>
    <scope>INDUCTION</scope>
    <scope>INTERACTION WITH NEDD4</scope>
    <source>
        <tissue>T-cell</tissue>
    </source>
</reference>
<reference key="2">
    <citation type="journal article" date="2003" name="Oncogene">
        <title>Large-scale identification and characterization of human genes that activate NF-kappaB and MAPK signaling pathways.</title>
        <authorList>
            <person name="Matsuda A."/>
            <person name="Suzuki Y."/>
            <person name="Honda G."/>
            <person name="Muramatsu S."/>
            <person name="Matsuzaki O."/>
            <person name="Nagano Y."/>
            <person name="Doi T."/>
            <person name="Shimotohno K."/>
            <person name="Harada T."/>
            <person name="Nishida E."/>
            <person name="Hayashi H."/>
            <person name="Sugano S."/>
        </authorList>
    </citation>
    <scope>NUCLEOTIDE SEQUENCE [LARGE SCALE MRNA]</scope>
    <scope>FUNCTION</scope>
    <scope>VARIANT VAL-136</scope>
    <source>
        <tissue>Lung fibroblast</tissue>
    </source>
</reference>
<reference key="3">
    <citation type="journal article" date="2004" name="Nature">
        <title>The DNA sequence and analysis of human chromosome 13.</title>
        <authorList>
            <person name="Dunham A."/>
            <person name="Matthews L.H."/>
            <person name="Burton J."/>
            <person name="Ashurst J.L."/>
            <person name="Howe K.L."/>
            <person name="Ashcroft K.J."/>
            <person name="Beare D.M."/>
            <person name="Burford D.C."/>
            <person name="Hunt S.E."/>
            <person name="Griffiths-Jones S."/>
            <person name="Jones M.C."/>
            <person name="Keenan S.J."/>
            <person name="Oliver K."/>
            <person name="Scott C.E."/>
            <person name="Ainscough R."/>
            <person name="Almeida J.P."/>
            <person name="Ambrose K.D."/>
            <person name="Andrews D.T."/>
            <person name="Ashwell R.I.S."/>
            <person name="Babbage A.K."/>
            <person name="Bagguley C.L."/>
            <person name="Bailey J."/>
            <person name="Bannerjee R."/>
            <person name="Barlow K.F."/>
            <person name="Bates K."/>
            <person name="Beasley H."/>
            <person name="Bird C.P."/>
            <person name="Bray-Allen S."/>
            <person name="Brown A.J."/>
            <person name="Brown J.Y."/>
            <person name="Burrill W."/>
            <person name="Carder C."/>
            <person name="Carter N.P."/>
            <person name="Chapman J.C."/>
            <person name="Clamp M.E."/>
            <person name="Clark S.Y."/>
            <person name="Clarke G."/>
            <person name="Clee C.M."/>
            <person name="Clegg S.C."/>
            <person name="Cobley V."/>
            <person name="Collins J.E."/>
            <person name="Corby N."/>
            <person name="Coville G.J."/>
            <person name="Deloukas P."/>
            <person name="Dhami P."/>
            <person name="Dunham I."/>
            <person name="Dunn M."/>
            <person name="Earthrowl M.E."/>
            <person name="Ellington A.G."/>
            <person name="Faulkner L."/>
            <person name="Frankish A.G."/>
            <person name="Frankland J."/>
            <person name="French L."/>
            <person name="Garner P."/>
            <person name="Garnett J."/>
            <person name="Gilbert J.G.R."/>
            <person name="Gilson C.J."/>
            <person name="Ghori J."/>
            <person name="Grafham D.V."/>
            <person name="Gribble S.M."/>
            <person name="Griffiths C."/>
            <person name="Hall R.E."/>
            <person name="Hammond S."/>
            <person name="Harley J.L."/>
            <person name="Hart E.A."/>
            <person name="Heath P.D."/>
            <person name="Howden P.J."/>
            <person name="Huckle E.J."/>
            <person name="Hunt P.J."/>
            <person name="Hunt A.R."/>
            <person name="Johnson C."/>
            <person name="Johnson D."/>
            <person name="Kay M."/>
            <person name="Kimberley A.M."/>
            <person name="King A."/>
            <person name="Laird G.K."/>
            <person name="Langford C.J."/>
            <person name="Lawlor S."/>
            <person name="Leongamornlert D.A."/>
            <person name="Lloyd D.M."/>
            <person name="Lloyd C."/>
            <person name="Loveland J.E."/>
            <person name="Lovell J."/>
            <person name="Martin S."/>
            <person name="Mashreghi-Mohammadi M."/>
            <person name="McLaren S.J."/>
            <person name="McMurray A."/>
            <person name="Milne S."/>
            <person name="Moore M.J.F."/>
            <person name="Nickerson T."/>
            <person name="Palmer S.A."/>
            <person name="Pearce A.V."/>
            <person name="Peck A.I."/>
            <person name="Pelan S."/>
            <person name="Phillimore B."/>
            <person name="Porter K.M."/>
            <person name="Rice C.M."/>
            <person name="Searle S."/>
            <person name="Sehra H.K."/>
            <person name="Shownkeen R."/>
            <person name="Skuce C.D."/>
            <person name="Smith M."/>
            <person name="Steward C.A."/>
            <person name="Sycamore N."/>
            <person name="Tester J."/>
            <person name="Thomas D.W."/>
            <person name="Tracey A."/>
            <person name="Tromans A."/>
            <person name="Tubby B."/>
            <person name="Wall M."/>
            <person name="Wallis J.M."/>
            <person name="West A.P."/>
            <person name="Whitehead S.L."/>
            <person name="Willey D.L."/>
            <person name="Wilming L."/>
            <person name="Wray P.W."/>
            <person name="Wright M.W."/>
            <person name="Young L."/>
            <person name="Coulson A."/>
            <person name="Durbin R.M."/>
            <person name="Hubbard T."/>
            <person name="Sulston J.E."/>
            <person name="Beck S."/>
            <person name="Bentley D.R."/>
            <person name="Rogers J."/>
            <person name="Ross M.T."/>
        </authorList>
    </citation>
    <scope>NUCLEOTIDE SEQUENCE [LARGE SCALE GENOMIC DNA]</scope>
</reference>
<reference key="4">
    <citation type="journal article" date="2004" name="Nat. Genet.">
        <title>Complete sequencing and characterization of 21,243 full-length human cDNAs.</title>
        <authorList>
            <person name="Ota T."/>
            <person name="Suzuki Y."/>
            <person name="Nishikawa T."/>
            <person name="Otsuki T."/>
            <person name="Sugiyama T."/>
            <person name="Irie R."/>
            <person name="Wakamatsu A."/>
            <person name="Hayashi K."/>
            <person name="Sato H."/>
            <person name="Nagai K."/>
            <person name="Kimura K."/>
            <person name="Makita H."/>
            <person name="Sekine M."/>
            <person name="Obayashi M."/>
            <person name="Nishi T."/>
            <person name="Shibahara T."/>
            <person name="Tanaka T."/>
            <person name="Ishii S."/>
            <person name="Yamamoto J."/>
            <person name="Saito K."/>
            <person name="Kawai Y."/>
            <person name="Isono Y."/>
            <person name="Nakamura Y."/>
            <person name="Nagahari K."/>
            <person name="Murakami K."/>
            <person name="Yasuda T."/>
            <person name="Iwayanagi T."/>
            <person name="Wagatsuma M."/>
            <person name="Shiratori A."/>
            <person name="Sudo H."/>
            <person name="Hosoiri T."/>
            <person name="Kaku Y."/>
            <person name="Kodaira H."/>
            <person name="Kondo H."/>
            <person name="Sugawara M."/>
            <person name="Takahashi M."/>
            <person name="Kanda K."/>
            <person name="Yokoi T."/>
            <person name="Furuya T."/>
            <person name="Kikkawa E."/>
            <person name="Omura Y."/>
            <person name="Abe K."/>
            <person name="Kamihara K."/>
            <person name="Katsuta N."/>
            <person name="Sato K."/>
            <person name="Tanikawa M."/>
            <person name="Yamazaki M."/>
            <person name="Ninomiya K."/>
            <person name="Ishibashi T."/>
            <person name="Yamashita H."/>
            <person name="Murakawa K."/>
            <person name="Fujimori K."/>
            <person name="Tanai H."/>
            <person name="Kimata M."/>
            <person name="Watanabe M."/>
            <person name="Hiraoka S."/>
            <person name="Chiba Y."/>
            <person name="Ishida S."/>
            <person name="Ono Y."/>
            <person name="Takiguchi S."/>
            <person name="Watanabe S."/>
            <person name="Yosida M."/>
            <person name="Hotuta T."/>
            <person name="Kusano J."/>
            <person name="Kanehori K."/>
            <person name="Takahashi-Fujii A."/>
            <person name="Hara H."/>
            <person name="Tanase T.-O."/>
            <person name="Nomura Y."/>
            <person name="Togiya S."/>
            <person name="Komai F."/>
            <person name="Hara R."/>
            <person name="Takeuchi K."/>
            <person name="Arita M."/>
            <person name="Imose N."/>
            <person name="Musashino K."/>
            <person name="Yuuki H."/>
            <person name="Oshima A."/>
            <person name="Sasaki N."/>
            <person name="Aotsuka S."/>
            <person name="Yoshikawa Y."/>
            <person name="Matsunawa H."/>
            <person name="Ichihara T."/>
            <person name="Shiohata N."/>
            <person name="Sano S."/>
            <person name="Moriya S."/>
            <person name="Momiyama H."/>
            <person name="Satoh N."/>
            <person name="Takami S."/>
            <person name="Terashima Y."/>
            <person name="Suzuki O."/>
            <person name="Nakagawa S."/>
            <person name="Senoh A."/>
            <person name="Mizoguchi H."/>
            <person name="Goto Y."/>
            <person name="Shimizu F."/>
            <person name="Wakebe H."/>
            <person name="Hishigaki H."/>
            <person name="Watanabe T."/>
            <person name="Sugiyama A."/>
            <person name="Takemoto M."/>
            <person name="Kawakami B."/>
            <person name="Yamazaki M."/>
            <person name="Watanabe K."/>
            <person name="Kumagai A."/>
            <person name="Itakura S."/>
            <person name="Fukuzumi Y."/>
            <person name="Fujimori Y."/>
            <person name="Komiyama M."/>
            <person name="Tashiro H."/>
            <person name="Tanigami A."/>
            <person name="Fujiwara T."/>
            <person name="Ono T."/>
            <person name="Yamada K."/>
            <person name="Fujii Y."/>
            <person name="Ozaki K."/>
            <person name="Hirao M."/>
            <person name="Ohmori Y."/>
            <person name="Kawabata A."/>
            <person name="Hikiji T."/>
            <person name="Kobatake N."/>
            <person name="Inagaki H."/>
            <person name="Ikema Y."/>
            <person name="Okamoto S."/>
            <person name="Okitani R."/>
            <person name="Kawakami T."/>
            <person name="Noguchi S."/>
            <person name="Itoh T."/>
            <person name="Shigeta K."/>
            <person name="Senba T."/>
            <person name="Matsumura K."/>
            <person name="Nakajima Y."/>
            <person name="Mizuno T."/>
            <person name="Morinaga M."/>
            <person name="Sasaki M."/>
            <person name="Togashi T."/>
            <person name="Oyama M."/>
            <person name="Hata H."/>
            <person name="Watanabe M."/>
            <person name="Komatsu T."/>
            <person name="Mizushima-Sugano J."/>
            <person name="Satoh T."/>
            <person name="Shirai Y."/>
            <person name="Takahashi Y."/>
            <person name="Nakagawa K."/>
            <person name="Okumura K."/>
            <person name="Nagase T."/>
            <person name="Nomura N."/>
            <person name="Kikuchi H."/>
            <person name="Masuho Y."/>
            <person name="Yamashita R."/>
            <person name="Nakai K."/>
            <person name="Yada T."/>
            <person name="Nakamura Y."/>
            <person name="Ohara O."/>
            <person name="Isogai T."/>
            <person name="Sugano S."/>
        </authorList>
    </citation>
    <scope>NUCLEOTIDE SEQUENCE [LARGE SCALE MRNA] OF 44-336</scope>
</reference>
<reference key="5">
    <citation type="journal article" date="1999" name="DNA Res.">
        <title>Characterization of cDNA clones selected by the GeneMark analysis from size-fractionated cDNA libraries from human brain.</title>
        <authorList>
            <person name="Hirosawa M."/>
            <person name="Nagase T."/>
            <person name="Ishikawa K."/>
            <person name="Kikuno R."/>
            <person name="Nomura N."/>
            <person name="Ohara O."/>
        </authorList>
    </citation>
    <scope>NUCLEOTIDE SEQUENCE [LARGE SCALE MRNA] OF 53-336</scope>
    <scope>VARIANT VAL-136</scope>
    <source>
        <tissue>Brain</tissue>
    </source>
</reference>
<reference key="6">
    <citation type="journal article" date="2004" name="Genome Res.">
        <title>The status, quality, and expansion of the NIH full-length cDNA project: the Mammalian Gene Collection (MGC).</title>
        <authorList>
            <consortium name="The MGC Project Team"/>
        </authorList>
    </citation>
    <scope>NUCLEOTIDE SEQUENCE [LARGE SCALE MRNA] OF 54-336</scope>
    <scope>VARIANT VAL-136</scope>
    <source>
        <tissue>Bone marrow</tissue>
        <tissue>Muscle</tissue>
    </source>
</reference>
<reference key="7">
    <citation type="journal article" date="2008" name="Blood">
        <title>Regulation of the divalent metal ion transporter DMT1 and iron homeostasis by a ubiquitin-dependent mechanism involving Ndfips and WWP2.</title>
        <authorList>
            <person name="Foot N.J."/>
            <person name="Dalton H.E."/>
            <person name="Shearwin-Whyatt L.M."/>
            <person name="Dorstyn L."/>
            <person name="Tan S.S."/>
            <person name="Yang B."/>
            <person name="Kumar S."/>
        </authorList>
    </citation>
    <scope>SUBCELLULAR LOCATION</scope>
    <scope>INTERACTION WITH SLC11A2 AND WWP2</scope>
</reference>
<reference key="8">
    <citation type="journal article" date="2009" name="EMBO Rep.">
        <title>Control of the activity of WW-HECT domain E3 ubiquitin ligases by NDFIP proteins.</title>
        <authorList>
            <person name="Mund T."/>
            <person name="Pelham H.R."/>
        </authorList>
    </citation>
    <scope>FUNCTION</scope>
    <scope>UBIQUITINATION</scope>
</reference>
<reference key="9">
    <citation type="journal article" date="2010" name="Proc. Natl. Acad. Sci. U.S.A.">
        <title>Regulation of PTEN/Akt and MAP kinase signaling pathways by the ubiquitin ligase activators Ndfip1 and Ndfip2.</title>
        <authorList>
            <person name="Mund T."/>
            <person name="Pelham H.R."/>
        </authorList>
    </citation>
    <scope>FUNCTION</scope>
    <scope>INTERACTION WITH LYN; NDFIP1; NEDD4; PTEN AND SRC</scope>
    <scope>SUBCELLULAR LOCATION</scope>
    <scope>TOPOLOGY</scope>
    <scope>PHOSPHORYLATION AT TYR-151; TYR-167; TYR-171 AND TYR-177</scope>
    <scope>MUTAGENESIS OF 149-PRO--TYR-151; TYR-167; 175-PRO--TYR-177 AND 184-PRO--TYR-186</scope>
</reference>
<reference key="10">
    <citation type="journal article" date="2015" name="Biochem. J.">
        <title>Regulation of the human ether-a-go-go-related gene (hERG) potassium channel by Nedd4 family interacting proteins (Ndfips).</title>
        <authorList>
            <person name="Kang Y."/>
            <person name="Guo J."/>
            <person name="Yang T."/>
            <person name="Li W."/>
            <person name="Zhang S."/>
        </authorList>
    </citation>
    <scope>FUNCTION</scope>
    <scope>SUBCELLULAR LOCATION</scope>
    <scope>INTERACTION WITH KCNH2 AND NEDD4L</scope>
</reference>
<name>NFIP2_HUMAN</name>
<proteinExistence type="evidence at protein level"/>
<keyword id="KW-0967">Endosome</keyword>
<keyword id="KW-0333">Golgi apparatus</keyword>
<keyword id="KW-0472">Membrane</keyword>
<keyword id="KW-0597">Phosphoprotein</keyword>
<keyword id="KW-1267">Proteomics identification</keyword>
<keyword id="KW-1185">Reference proteome</keyword>
<keyword id="KW-0677">Repeat</keyword>
<keyword id="KW-0812">Transmembrane</keyword>
<keyword id="KW-1133">Transmembrane helix</keyword>
<keyword id="KW-0832">Ubl conjugation</keyword>
<feature type="chain" id="PRO_0000096794" description="NEDD4 family-interacting protein 2">
    <location>
        <begin position="1"/>
        <end position="336"/>
    </location>
</feature>
<feature type="topological domain" description="Cytoplasmic" evidence="3">
    <location>
        <begin position="1"/>
        <end position="231"/>
    </location>
</feature>
<feature type="transmembrane region" description="Helical" evidence="3">
    <location>
        <begin position="232"/>
        <end position="252"/>
    </location>
</feature>
<feature type="topological domain" description="Extracellular" evidence="3">
    <location>
        <begin position="253"/>
        <end position="257"/>
    </location>
</feature>
<feature type="transmembrane region" description="Helical" evidence="3">
    <location>
        <begin position="258"/>
        <end position="278"/>
    </location>
</feature>
<feature type="topological domain" description="Cytoplasmic" evidence="3">
    <location>
        <begin position="279"/>
        <end position="287"/>
    </location>
</feature>
<feature type="transmembrane region" description="Helical" evidence="3">
    <location>
        <begin position="288"/>
        <end position="308"/>
    </location>
</feature>
<feature type="topological domain" description="Extracellular" evidence="3">
    <location>
        <begin position="309"/>
        <end position="336"/>
    </location>
</feature>
<feature type="region of interest" description="Disordered" evidence="4">
    <location>
        <begin position="1"/>
        <end position="24"/>
    </location>
</feature>
<feature type="region of interest" description="Disordered" evidence="4">
    <location>
        <begin position="37"/>
        <end position="156"/>
    </location>
</feature>
<feature type="region of interest" description="Interaction with NEDD4" evidence="1">
    <location>
        <begin position="148"/>
        <end position="151"/>
    </location>
</feature>
<feature type="short sequence motif" description="PPxY motif 1">
    <location>
        <begin position="148"/>
        <end position="151"/>
    </location>
</feature>
<feature type="short sequence motif" description="PPxY motif 2">
    <location>
        <begin position="174"/>
        <end position="177"/>
    </location>
</feature>
<feature type="short sequence motif" description="PPxY motif 3">
    <location>
        <begin position="184"/>
        <end position="186"/>
    </location>
</feature>
<feature type="compositionally biased region" description="Low complexity" evidence="4">
    <location>
        <begin position="37"/>
        <end position="48"/>
    </location>
</feature>
<feature type="compositionally biased region" description="Basic and acidic residues" evidence="4">
    <location>
        <begin position="78"/>
        <end position="99"/>
    </location>
</feature>
<feature type="site" description="Not phosphorylated by SRC">
    <location>
        <position position="186"/>
    </location>
</feature>
<feature type="modified residue" description="Phosphotyrosine; by SRC" evidence="11">
    <location>
        <position position="151"/>
    </location>
</feature>
<feature type="modified residue" description="Phosphotyrosine; by SRC" evidence="11">
    <location>
        <position position="167"/>
    </location>
</feature>
<feature type="modified residue" description="Phosphotyrosine; by SRC" evidence="11">
    <location>
        <position position="171"/>
    </location>
</feature>
<feature type="modified residue" description="Phosphotyrosine; by SRC" evidence="11">
    <location>
        <position position="177"/>
    </location>
</feature>
<feature type="sequence variant" id="VAR_061687" description="In dbSNP:rs55887763.">
    <original>P</original>
    <variation>S</variation>
    <location>
        <position position="124"/>
    </location>
</feature>
<feature type="sequence variant" id="VAR_023414" description="In dbSNP:rs11549502." evidence="5 6 8">
    <original>A</original>
    <variation>V</variation>
    <location>
        <position position="136"/>
    </location>
</feature>
<feature type="mutagenesis site" description="Loss of E3 ubiquitin-protein ligase activation; when associated with 175-P--G-177 and 184-P--G-186. Greatly decreases NEDD4-binding; when associated with 175-P--G-177 and 184-P--G-186. No effect on PTEN-binding; when associated with 175-P--G-177 and 184-P--G-186.">
    <original>PY</original>
    <variation>AG</variation>
    <location>
        <begin position="150"/>
        <end position="151"/>
    </location>
</feature>
<feature type="mutagenesis site" description="Loss of NDFIP2 phosphorylation by SRC." evidence="11">
    <original>Y</original>
    <variation>F</variation>
    <location>
        <position position="167"/>
    </location>
</feature>
<feature type="mutagenesis site" description="Loss of E3 ubiquitin-protein ligase activation; when associated with 149-P--G-151 and 184-P--G-186. Greatly decreases NEDD4-binding; when associated with 149-P-G-151 and 184-P--G-186. No effect on PTEN-binding; when associated with 149-P--G-151 and 184-P--G-186.">
    <original>PY</original>
    <variation>AG</variation>
    <location>
        <begin position="176"/>
        <end position="177"/>
    </location>
</feature>
<feature type="mutagenesis site" description="Loss of E3 ubiquitin-protein ligase activation; when associated with 149-P--G-151 and 175-P--G-177. Greatly decreases NEDD4-binding; when associated with 149-P--G-151 and 175-P--G-177. No effect on PTEN-binding; when associated with 149-P--G-151 and 175-P--G-177.">
    <original>TY</original>
    <variation>AG</variation>
    <location>
        <begin position="185"/>
        <end position="186"/>
    </location>
</feature>
<dbReference type="EMBL" id="AB097019">
    <property type="protein sequence ID" value="BAC77372.1"/>
    <property type="molecule type" value="mRNA"/>
</dbReference>
<dbReference type="EMBL" id="AB097028">
    <property type="protein sequence ID" value="BAC77381.1"/>
    <property type="molecule type" value="mRNA"/>
</dbReference>
<dbReference type="EMBL" id="AB097029">
    <property type="protein sequence ID" value="BAC77382.1"/>
    <property type="molecule type" value="mRNA"/>
</dbReference>
<dbReference type="EMBL" id="AB097030">
    <property type="protein sequence ID" value="BAC77383.1"/>
    <property type="molecule type" value="mRNA"/>
</dbReference>
<dbReference type="EMBL" id="AB097031">
    <property type="protein sequence ID" value="BAC77384.1"/>
    <property type="molecule type" value="mRNA"/>
</dbReference>
<dbReference type="EMBL" id="AL136442">
    <property type="status" value="NOT_ANNOTATED_CDS"/>
    <property type="molecule type" value="Genomic_DNA"/>
</dbReference>
<dbReference type="EMBL" id="AL355603">
    <property type="status" value="NOT_ANNOTATED_CDS"/>
    <property type="molecule type" value="Genomic_DNA"/>
</dbReference>
<dbReference type="EMBL" id="AK001723">
    <property type="protein sequence ID" value="BAA91863.1"/>
    <property type="status" value="ALT_INIT"/>
    <property type="molecule type" value="mRNA"/>
</dbReference>
<dbReference type="EMBL" id="AB032991">
    <property type="protein sequence ID" value="BAA86479.1"/>
    <property type="molecule type" value="mRNA"/>
</dbReference>
<dbReference type="EMBL" id="BC021988">
    <property type="protein sequence ID" value="AAH21988.1"/>
    <property type="status" value="ALT_INIT"/>
    <property type="molecule type" value="mRNA"/>
</dbReference>
<dbReference type="EMBL" id="BC026126">
    <property type="protein sequence ID" value="AAH26126.1"/>
    <property type="status" value="ALT_INIT"/>
    <property type="molecule type" value="mRNA"/>
</dbReference>
<dbReference type="CCDS" id="CCDS31998.1"/>
<dbReference type="RefSeq" id="NP_061953.2">
    <property type="nucleotide sequence ID" value="NM_019080.3"/>
</dbReference>
<dbReference type="BioGRID" id="120074">
    <property type="interactions" value="63"/>
</dbReference>
<dbReference type="CORUM" id="Q9NV92"/>
<dbReference type="FunCoup" id="Q9NV92">
    <property type="interactions" value="2038"/>
</dbReference>
<dbReference type="IntAct" id="Q9NV92">
    <property type="interactions" value="37"/>
</dbReference>
<dbReference type="STRING" id="9606.ENSP00000480798"/>
<dbReference type="GlyGen" id="Q9NV92">
    <property type="glycosylation" value="1 site, 1 O-linked glycan (1 site)"/>
</dbReference>
<dbReference type="iPTMnet" id="Q9NV92"/>
<dbReference type="PhosphoSitePlus" id="Q9NV92"/>
<dbReference type="SwissPalm" id="Q9NV92"/>
<dbReference type="BioMuta" id="NDFIP2"/>
<dbReference type="DMDM" id="73921209"/>
<dbReference type="jPOST" id="Q9NV92"/>
<dbReference type="MassIVE" id="Q9NV92"/>
<dbReference type="PaxDb" id="9606-ENSP00000480798"/>
<dbReference type="PeptideAtlas" id="Q9NV92"/>
<dbReference type="ProteomicsDB" id="82762"/>
<dbReference type="Pumba" id="Q9NV92"/>
<dbReference type="Antibodypedia" id="1950">
    <property type="antibodies" value="60 antibodies from 19 providers"/>
</dbReference>
<dbReference type="DNASU" id="54602"/>
<dbReference type="Ensembl" id="ENST00000218652.12">
    <property type="protein sequence ID" value="ENSP00000218652.7"/>
    <property type="gene ID" value="ENSG00000102471.16"/>
</dbReference>
<dbReference type="GeneID" id="54602"/>
<dbReference type="KEGG" id="hsa:54602"/>
<dbReference type="MANE-Select" id="ENST00000218652.12">
    <property type="protein sequence ID" value="ENSP00000218652.7"/>
    <property type="RefSeq nucleotide sequence ID" value="NM_019080.3"/>
    <property type="RefSeq protein sequence ID" value="NP_061953.2"/>
</dbReference>
<dbReference type="UCSC" id="uc001vlf.4">
    <property type="organism name" value="human"/>
</dbReference>
<dbReference type="AGR" id="HGNC:18537"/>
<dbReference type="CTD" id="54602"/>
<dbReference type="DisGeNET" id="54602"/>
<dbReference type="GeneCards" id="NDFIP2"/>
<dbReference type="HGNC" id="HGNC:18537">
    <property type="gene designation" value="NDFIP2"/>
</dbReference>
<dbReference type="HPA" id="ENSG00000102471">
    <property type="expression patterns" value="Low tissue specificity"/>
</dbReference>
<dbReference type="MIM" id="610041">
    <property type="type" value="gene"/>
</dbReference>
<dbReference type="neXtProt" id="NX_Q9NV92"/>
<dbReference type="OpenTargets" id="ENSG00000102471"/>
<dbReference type="PharmGKB" id="PA134953250"/>
<dbReference type="VEuPathDB" id="HostDB:ENSG00000102471"/>
<dbReference type="eggNOG" id="KOG4812">
    <property type="taxonomic scope" value="Eukaryota"/>
</dbReference>
<dbReference type="GeneTree" id="ENSGT00390000012721"/>
<dbReference type="HOGENOM" id="CLU_074980_0_0_1"/>
<dbReference type="InParanoid" id="Q9NV92"/>
<dbReference type="OMA" id="FASHENS"/>
<dbReference type="OrthoDB" id="10003116at2759"/>
<dbReference type="PAN-GO" id="Q9NV92">
    <property type="GO annotations" value="7 GO annotations based on evolutionary models"/>
</dbReference>
<dbReference type="PhylomeDB" id="Q9NV92"/>
<dbReference type="TreeFam" id="TF324911"/>
<dbReference type="PathwayCommons" id="Q9NV92"/>
<dbReference type="SignaLink" id="Q9NV92"/>
<dbReference type="SIGNOR" id="Q9NV92"/>
<dbReference type="BioGRID-ORCS" id="54602">
    <property type="hits" value="21 hits in 1166 CRISPR screens"/>
</dbReference>
<dbReference type="ChiTaRS" id="NDFIP2">
    <property type="organism name" value="human"/>
</dbReference>
<dbReference type="GeneWiki" id="NDFIP2"/>
<dbReference type="GenomeRNAi" id="54602"/>
<dbReference type="Pharos" id="Q9NV92">
    <property type="development level" value="Tbio"/>
</dbReference>
<dbReference type="PRO" id="PR:Q9NV92"/>
<dbReference type="Proteomes" id="UP000005640">
    <property type="component" value="Chromosome 13"/>
</dbReference>
<dbReference type="RNAct" id="Q9NV92">
    <property type="molecule type" value="protein"/>
</dbReference>
<dbReference type="Bgee" id="ENSG00000102471">
    <property type="expression patterns" value="Expressed in secondary oocyte and 186 other cell types or tissues"/>
</dbReference>
<dbReference type="ExpressionAtlas" id="Q9NV92">
    <property type="expression patterns" value="baseline and differential"/>
</dbReference>
<dbReference type="GO" id="GO:0005737">
    <property type="term" value="C:cytoplasm"/>
    <property type="evidence" value="ECO:0000314"/>
    <property type="project" value="BHF-UCL"/>
</dbReference>
<dbReference type="GO" id="GO:0005783">
    <property type="term" value="C:endoplasmic reticulum"/>
    <property type="evidence" value="ECO:0000314"/>
    <property type="project" value="BHF-UCL"/>
</dbReference>
<dbReference type="GO" id="GO:0005794">
    <property type="term" value="C:Golgi apparatus"/>
    <property type="evidence" value="ECO:0000314"/>
    <property type="project" value="BHF-UCL"/>
</dbReference>
<dbReference type="GO" id="GO:0000139">
    <property type="term" value="C:Golgi membrane"/>
    <property type="evidence" value="ECO:0007669"/>
    <property type="project" value="UniProtKB-SubCell"/>
</dbReference>
<dbReference type="GO" id="GO:0043231">
    <property type="term" value="C:intracellular membrane-bounded organelle"/>
    <property type="evidence" value="ECO:0000314"/>
    <property type="project" value="HPA"/>
</dbReference>
<dbReference type="GO" id="GO:0005739">
    <property type="term" value="C:mitochondrion"/>
    <property type="evidence" value="ECO:0000314"/>
    <property type="project" value="BHF-UCL"/>
</dbReference>
<dbReference type="GO" id="GO:0032585">
    <property type="term" value="C:multivesicular body membrane"/>
    <property type="evidence" value="ECO:0007669"/>
    <property type="project" value="UniProtKB-SubCell"/>
</dbReference>
<dbReference type="GO" id="GO:0048471">
    <property type="term" value="C:perinuclear region of cytoplasm"/>
    <property type="evidence" value="ECO:0000314"/>
    <property type="project" value="UniProtKB"/>
</dbReference>
<dbReference type="GO" id="GO:0050699">
    <property type="term" value="F:WW domain binding"/>
    <property type="evidence" value="ECO:0000353"/>
    <property type="project" value="BHF-UCL"/>
</dbReference>
<dbReference type="GO" id="GO:0030001">
    <property type="term" value="P:metal ion transport"/>
    <property type="evidence" value="ECO:0007669"/>
    <property type="project" value="InterPro"/>
</dbReference>
<dbReference type="GO" id="GO:0010629">
    <property type="term" value="P:negative regulation of gene expression"/>
    <property type="evidence" value="ECO:0000315"/>
    <property type="project" value="UniProtKB"/>
</dbReference>
<dbReference type="GO" id="GO:0051224">
    <property type="term" value="P:negative regulation of protein transport"/>
    <property type="evidence" value="ECO:0000315"/>
    <property type="project" value="UniProtKB"/>
</dbReference>
<dbReference type="GO" id="GO:0032410">
    <property type="term" value="P:negative regulation of transporter activity"/>
    <property type="evidence" value="ECO:0000315"/>
    <property type="project" value="UniProtKB"/>
</dbReference>
<dbReference type="GO" id="GO:0043123">
    <property type="term" value="P:positive regulation of canonical NF-kappaB signal transduction"/>
    <property type="evidence" value="ECO:0007001"/>
    <property type="project" value="UniProtKB"/>
</dbReference>
<dbReference type="GO" id="GO:0031398">
    <property type="term" value="P:positive regulation of protein ubiquitination"/>
    <property type="evidence" value="ECO:0000315"/>
    <property type="project" value="UniProtKB"/>
</dbReference>
<dbReference type="GO" id="GO:0006511">
    <property type="term" value="P:ubiquitin-dependent protein catabolic process"/>
    <property type="evidence" value="ECO:0000318"/>
    <property type="project" value="GO_Central"/>
</dbReference>
<dbReference type="GO" id="GO:0007034">
    <property type="term" value="P:vacuolar transport"/>
    <property type="evidence" value="ECO:0007669"/>
    <property type="project" value="InterPro"/>
</dbReference>
<dbReference type="CDD" id="cd22306">
    <property type="entry name" value="NDFIP2"/>
    <property type="match status" value="1"/>
</dbReference>
<dbReference type="InterPro" id="IPR019325">
    <property type="entry name" value="NEDD4/Bsd2"/>
</dbReference>
<dbReference type="PANTHER" id="PTHR13396">
    <property type="entry name" value="NEDD4 FAMILY INTERACTING PROTEIN 1/2"/>
    <property type="match status" value="1"/>
</dbReference>
<dbReference type="PANTHER" id="PTHR13396:SF4">
    <property type="entry name" value="NEDD4 FAMILY-INTERACTING PROTEIN 2"/>
    <property type="match status" value="1"/>
</dbReference>
<dbReference type="Pfam" id="PF10176">
    <property type="entry name" value="NEDD4_Bsd2"/>
    <property type="match status" value="2"/>
</dbReference>
<evidence type="ECO:0000250" key="1"/>
<evidence type="ECO:0000250" key="2">
    <source>
        <dbReference type="UniProtKB" id="Q91ZP6"/>
    </source>
</evidence>
<evidence type="ECO:0000255" key="3"/>
<evidence type="ECO:0000256" key="4">
    <source>
        <dbReference type="SAM" id="MobiDB-lite"/>
    </source>
</evidence>
<evidence type="ECO:0000269" key="5">
    <source>
    </source>
</evidence>
<evidence type="ECO:0000269" key="6">
    <source>
    </source>
</evidence>
<evidence type="ECO:0000269" key="7">
    <source>
    </source>
</evidence>
<evidence type="ECO:0000269" key="8">
    <source>
    </source>
</evidence>
<evidence type="ECO:0000269" key="9">
    <source>
    </source>
</evidence>
<evidence type="ECO:0000269" key="10">
    <source>
    </source>
</evidence>
<evidence type="ECO:0000269" key="11">
    <source>
    </source>
</evidence>
<evidence type="ECO:0000269" key="12">
    <source>
    </source>
</evidence>
<evidence type="ECO:0000305" key="13"/>
<comment type="function">
    <text evidence="2 6 10 11 12">Activates HECT domain-containing E3 ubiquitin-protein ligases, including ITCH, NEDD4, NEDD4L, SMURF2, WWP1 and WWP2, and consequently modulates the stability of their targets. As a result, may control many cellular processes. Recruits ITCH, NEDD4 and SMURF2 to endosomal membranes. Negatively regulates KCNH2 potassium channel activity by decreasing its cell-surface expression and interfering with channel maturation through recruitment of NEDD4L to the Golgi apparatus and multivesicular body where it mediates KCNH2 degradation (PubMed:26363003). May modulate EGFR signaling. Together with NDFIP1, limits the cytokine signaling and expansion of effector Th2 T-cells by promoting degradation of JAK1, probably by ITCH- and NEDD4L-mediated ubiquitination (By similarity).</text>
</comment>
<comment type="subunit">
    <text evidence="1 7 9 11 12">Forms heterodimers with NDFIP1. Interacts with HECT domain-containing E3 ubiquitin-protein ligases, including NEDD4 (PubMed:12796489). Interacts with NEDD4L (PubMed:26363003). Interacts with PTEN. When phosphorylated at Tyr-167, interacts with SRC and LYN SH2 domain. May thus act as a scaffold that recruits SRC to NDFIP1, enhancing NDFIP1 phosphorylation. Interacts with SLC11A2/DMT1 (PubMed:18776082). May interact with phosphorylated EGFR. Interacts with KCNH2 (PubMed:26363003).</text>
</comment>
<comment type="interaction">
    <interactant intactId="EBI-2933200">
        <id>Q9NV92</id>
    </interactant>
    <interactant intactId="EBI-395421">
        <id>Q16637</id>
        <label>SMN2</label>
    </interactant>
    <organismsDiffer>false</organismsDiffer>
    <experiments>3</experiments>
</comment>
<comment type="interaction">
    <interactant intactId="EBI-2933200">
        <id>Q9NV92</id>
    </interactant>
    <interactant intactId="EBI-1224427">
        <id>P07919</id>
        <label>UQCRH</label>
    </interactant>
    <organismsDiffer>false</organismsDiffer>
    <experiments>3</experiments>
</comment>
<comment type="subcellular location">
    <subcellularLocation>
        <location evidence="9">Endosome membrane</location>
        <topology evidence="9">Multi-pass membrane protein</topology>
    </subcellularLocation>
    <subcellularLocation>
        <location evidence="7 12">Golgi apparatus membrane</location>
    </subcellularLocation>
    <subcellularLocation>
        <location evidence="12">Endosome</location>
        <location evidence="12">Multivesicular body membrane</location>
    </subcellularLocation>
</comment>
<comment type="tissue specificity">
    <text evidence="7">Expressed in brain, lung, heart, skeletal muscle, kidney, liver and placenta.</text>
</comment>
<comment type="induction">
    <text evidence="7">By T-cell activation.</text>
</comment>
<comment type="domain">
    <text>The PPxY motifs are required for E3 ubiquitin-protein ligase activation and for ubiquitination.</text>
</comment>
<comment type="PTM">
    <text evidence="1">Ubiquitinated by NEDD4 and ITCH. Also ubiquitinated by NEDD4L. Ubiquitination by NEDD4 or NEDD4L does not affect turnover (By similarity).</text>
</comment>
<comment type="PTM">
    <text evidence="11">Undergoes transient tyrosine-phosphorylation following EGF stimulation, most probably catalyzed by SRC. Phosphorylation on Tyr-151, Tyr-171 and Tyr-177 are dependent on the phosphorylation on Tyr-167. Also phosphorylated by LYN and FYN.</text>
</comment>
<comment type="sequence caution" evidence="13">
    <conflict type="erroneous initiation">
        <sequence resource="EMBL-CDS" id="AAH21988"/>
    </conflict>
</comment>
<comment type="sequence caution" evidence="13">
    <conflict type="erroneous initiation">
        <sequence resource="EMBL-CDS" id="AAH26126"/>
    </conflict>
</comment>
<comment type="sequence caution" evidence="13">
    <conflict type="erroneous initiation">
        <sequence resource="EMBL-CDS" id="BAA91863"/>
    </conflict>
</comment>
<organism>
    <name type="scientific">Homo sapiens</name>
    <name type="common">Human</name>
    <dbReference type="NCBI Taxonomy" id="9606"/>
    <lineage>
        <taxon>Eukaryota</taxon>
        <taxon>Metazoa</taxon>
        <taxon>Chordata</taxon>
        <taxon>Craniata</taxon>
        <taxon>Vertebrata</taxon>
        <taxon>Euteleostomi</taxon>
        <taxon>Mammalia</taxon>
        <taxon>Eutheria</taxon>
        <taxon>Euarchontoglires</taxon>
        <taxon>Primates</taxon>
        <taxon>Haplorrhini</taxon>
        <taxon>Catarrhini</taxon>
        <taxon>Hominidae</taxon>
        <taxon>Homo</taxon>
    </lineage>
</organism>
<sequence length="336" mass="36390">MARRRSQRVCASGPSMLNSARGAPELLRGTATNAEVSAAAAGATGSEELPPGDRGCRNGGGRGPAATTSSTGVAVGAEHGEDSLSRKPDPEPGRMDHHQPGTGRYQVLLNEEDNSESSAIEQPPTSNPAPQIVQAASSAPALETDSSPPPYSSITVEVPTTSDTEVYGEFYPVPPPYSVATSLPTYDEAEKAKAAAMAAAAAETSQRIQEEECPPRDDFSDADQLRVGNDGIFMLAFFMAFIFNWLGFCLSFCITNTIAGRYGAICGFGLSLIKWILIVRFSDYFTGYFNGQYWLWWIFLVLGLLLFFRGFVNYLKVRNMSESMAAAHRTRYFFLL</sequence>
<protein>
    <recommendedName>
        <fullName>NEDD4 family-interacting protein 2</fullName>
    </recommendedName>
    <alternativeName>
        <fullName>NEDD4 WW domain-binding protein 5A</fullName>
    </alternativeName>
    <alternativeName>
        <fullName>Putative MAPK-activating protein PM04/PM05/PM06/PM07</fullName>
    </alternativeName>
    <alternativeName>
        <fullName>Putative NF-kappa-B-activating protein 413</fullName>
    </alternativeName>
</protein>
<gene>
    <name type="primary">NDFIP2</name>
    <name type="synonym">KIAA1165</name>
    <name type="synonym">N4WBP5A</name>
</gene>